<sequence length="905" mass="98625">MKRLSSAAIREQFLRFFEERGHVRVPSSSLIPGNDPTLLFTNSGMVQFKDTFLGLEQRPYTRATTAQKCLRVSGKHNDLEEVGPSPRHHTFFEMLGNFSFGDYFKAEAIPMAWELLTKVFDLPVERLWFTVFEGDDEVPPDDEAAQLWVAAGADPERVLRFGRKDNFWVMADAGPCGPCSEITIFIGDDLKEMSAKGVNSDDPNYVEIWNNVFMQFERSTMQPLHRPSVDTGMGLERMAMVMQGVHSTYDTDLFIPLIERQLALLGADEPTYRAHVAPFRAVADHSRAVAFLIADGVLPGNTGRSYVLRRILRRAVYQGRTVGFEKPFLADVAAVVIEQMGAVYPELRERADFILETVDLEERQFLRTLSGGVSILKSVIERVRAVGGTVIPGDDAFTLKDTYGFPLDLTQKIAAEHGLTVDEAGYERRMEEQRARGRRAAQFKRAADAEAWADIDLPPTRFTGYLGVSGSGTVQALIVAGDQVAEAVAGQQVQIALDSTPFYAESGGQIGDTGVLIGPRGRARIDDVQRPVPGVIVHYGVVEEGAIAVYETVEAQVDSVRRAAIMRSHTATHLLHRALRDVLGEHAAQAGSLVAPDRLRFDFTHTRPVTPEQLREIERRVNAWIRADTPVAWQELPYQAALEAGAIALFGEKYGDVVRMVTIGCVNGNDALSPAAIAERQRAGFRMCSRELCGGTHVGRSGEIGLFRIVSESSVAAGVRRIEALTGAEAEQWVDAQIATLHNIAARVGAPPSQLGERIEALLAELKQRQRALDELHARQARSNLEGLLANVQAVGDIRFLAAQVEAPDTARLREMGDWLRDKLGSGVVVLAAVIDGKAQILAMATPDLAGRRIHAGNLVKALAPIVGGSGGGRPDMAQAGGREVAHIPDALEHVAAALAAQAGG</sequence>
<dbReference type="EC" id="6.1.1.7" evidence="1"/>
<dbReference type="EMBL" id="CP000804">
    <property type="protein sequence ID" value="ABU59751.1"/>
    <property type="molecule type" value="Genomic_DNA"/>
</dbReference>
<dbReference type="RefSeq" id="WP_012122174.1">
    <property type="nucleotide sequence ID" value="NC_009767.1"/>
</dbReference>
<dbReference type="SMR" id="A7NQA5"/>
<dbReference type="STRING" id="383372.Rcas_3711"/>
<dbReference type="KEGG" id="rca:Rcas_3711"/>
<dbReference type="eggNOG" id="COG0013">
    <property type="taxonomic scope" value="Bacteria"/>
</dbReference>
<dbReference type="HOGENOM" id="CLU_004485_1_1_0"/>
<dbReference type="OrthoDB" id="9803884at2"/>
<dbReference type="Proteomes" id="UP000000263">
    <property type="component" value="Chromosome"/>
</dbReference>
<dbReference type="GO" id="GO:0005829">
    <property type="term" value="C:cytosol"/>
    <property type="evidence" value="ECO:0007669"/>
    <property type="project" value="TreeGrafter"/>
</dbReference>
<dbReference type="GO" id="GO:0004813">
    <property type="term" value="F:alanine-tRNA ligase activity"/>
    <property type="evidence" value="ECO:0007669"/>
    <property type="project" value="UniProtKB-UniRule"/>
</dbReference>
<dbReference type="GO" id="GO:0002161">
    <property type="term" value="F:aminoacyl-tRNA deacylase activity"/>
    <property type="evidence" value="ECO:0007669"/>
    <property type="project" value="TreeGrafter"/>
</dbReference>
<dbReference type="GO" id="GO:0005524">
    <property type="term" value="F:ATP binding"/>
    <property type="evidence" value="ECO:0007669"/>
    <property type="project" value="UniProtKB-UniRule"/>
</dbReference>
<dbReference type="GO" id="GO:0000049">
    <property type="term" value="F:tRNA binding"/>
    <property type="evidence" value="ECO:0007669"/>
    <property type="project" value="UniProtKB-KW"/>
</dbReference>
<dbReference type="GO" id="GO:0008270">
    <property type="term" value="F:zinc ion binding"/>
    <property type="evidence" value="ECO:0007669"/>
    <property type="project" value="UniProtKB-UniRule"/>
</dbReference>
<dbReference type="GO" id="GO:0006419">
    <property type="term" value="P:alanyl-tRNA aminoacylation"/>
    <property type="evidence" value="ECO:0007669"/>
    <property type="project" value="UniProtKB-UniRule"/>
</dbReference>
<dbReference type="CDD" id="cd00673">
    <property type="entry name" value="AlaRS_core"/>
    <property type="match status" value="1"/>
</dbReference>
<dbReference type="FunFam" id="3.10.310.40:FF:000001">
    <property type="entry name" value="Alanine--tRNA ligase"/>
    <property type="match status" value="1"/>
</dbReference>
<dbReference type="FunFam" id="3.30.930.10:FF:000004">
    <property type="entry name" value="Alanine--tRNA ligase"/>
    <property type="match status" value="1"/>
</dbReference>
<dbReference type="FunFam" id="3.30.980.10:FF:000004">
    <property type="entry name" value="Alanine--tRNA ligase, cytoplasmic"/>
    <property type="match status" value="1"/>
</dbReference>
<dbReference type="Gene3D" id="2.40.30.130">
    <property type="match status" value="1"/>
</dbReference>
<dbReference type="Gene3D" id="3.10.310.40">
    <property type="match status" value="1"/>
</dbReference>
<dbReference type="Gene3D" id="3.30.54.20">
    <property type="match status" value="1"/>
</dbReference>
<dbReference type="Gene3D" id="6.10.250.550">
    <property type="match status" value="1"/>
</dbReference>
<dbReference type="Gene3D" id="3.30.930.10">
    <property type="entry name" value="Bira Bifunctional Protein, Domain 2"/>
    <property type="match status" value="1"/>
</dbReference>
<dbReference type="Gene3D" id="3.30.980.10">
    <property type="entry name" value="Threonyl-trna Synthetase, Chain A, domain 2"/>
    <property type="match status" value="1"/>
</dbReference>
<dbReference type="HAMAP" id="MF_00036_B">
    <property type="entry name" value="Ala_tRNA_synth_B"/>
    <property type="match status" value="1"/>
</dbReference>
<dbReference type="InterPro" id="IPR045864">
    <property type="entry name" value="aa-tRNA-synth_II/BPL/LPL"/>
</dbReference>
<dbReference type="InterPro" id="IPR002318">
    <property type="entry name" value="Ala-tRNA-lgiase_IIc"/>
</dbReference>
<dbReference type="InterPro" id="IPR018162">
    <property type="entry name" value="Ala-tRNA-ligase_IIc_anticod-bd"/>
</dbReference>
<dbReference type="InterPro" id="IPR018165">
    <property type="entry name" value="Ala-tRNA-synth_IIc_core"/>
</dbReference>
<dbReference type="InterPro" id="IPR018164">
    <property type="entry name" value="Ala-tRNA-synth_IIc_N"/>
</dbReference>
<dbReference type="InterPro" id="IPR050058">
    <property type="entry name" value="Ala-tRNA_ligase"/>
</dbReference>
<dbReference type="InterPro" id="IPR023033">
    <property type="entry name" value="Ala_tRNA_ligase_euk/bac"/>
</dbReference>
<dbReference type="InterPro" id="IPR003156">
    <property type="entry name" value="DHHA1_dom"/>
</dbReference>
<dbReference type="InterPro" id="IPR018163">
    <property type="entry name" value="Thr/Ala-tRNA-synth_IIc_edit"/>
</dbReference>
<dbReference type="InterPro" id="IPR009000">
    <property type="entry name" value="Transl_B-barrel_sf"/>
</dbReference>
<dbReference type="InterPro" id="IPR012947">
    <property type="entry name" value="tRNA_SAD"/>
</dbReference>
<dbReference type="NCBIfam" id="TIGR00344">
    <property type="entry name" value="alaS"/>
    <property type="match status" value="1"/>
</dbReference>
<dbReference type="PANTHER" id="PTHR11777:SF9">
    <property type="entry name" value="ALANINE--TRNA LIGASE, CYTOPLASMIC"/>
    <property type="match status" value="1"/>
</dbReference>
<dbReference type="PANTHER" id="PTHR11777">
    <property type="entry name" value="ALANYL-TRNA SYNTHETASE"/>
    <property type="match status" value="1"/>
</dbReference>
<dbReference type="Pfam" id="PF02272">
    <property type="entry name" value="DHHA1"/>
    <property type="match status" value="1"/>
</dbReference>
<dbReference type="Pfam" id="PF01411">
    <property type="entry name" value="tRNA-synt_2c"/>
    <property type="match status" value="1"/>
</dbReference>
<dbReference type="Pfam" id="PF07973">
    <property type="entry name" value="tRNA_SAD"/>
    <property type="match status" value="1"/>
</dbReference>
<dbReference type="PRINTS" id="PR00980">
    <property type="entry name" value="TRNASYNTHALA"/>
</dbReference>
<dbReference type="SMART" id="SM00863">
    <property type="entry name" value="tRNA_SAD"/>
    <property type="match status" value="1"/>
</dbReference>
<dbReference type="SUPFAM" id="SSF55681">
    <property type="entry name" value="Class II aaRS and biotin synthetases"/>
    <property type="match status" value="1"/>
</dbReference>
<dbReference type="SUPFAM" id="SSF101353">
    <property type="entry name" value="Putative anticodon-binding domain of alanyl-tRNA synthetase (AlaRS)"/>
    <property type="match status" value="1"/>
</dbReference>
<dbReference type="SUPFAM" id="SSF55186">
    <property type="entry name" value="ThrRS/AlaRS common domain"/>
    <property type="match status" value="1"/>
</dbReference>
<dbReference type="SUPFAM" id="SSF50447">
    <property type="entry name" value="Translation proteins"/>
    <property type="match status" value="1"/>
</dbReference>
<dbReference type="PROSITE" id="PS50860">
    <property type="entry name" value="AA_TRNA_LIGASE_II_ALA"/>
    <property type="match status" value="1"/>
</dbReference>
<proteinExistence type="inferred from homology"/>
<accession>A7NQA5</accession>
<feature type="chain" id="PRO_0000347767" description="Alanine--tRNA ligase">
    <location>
        <begin position="1"/>
        <end position="905"/>
    </location>
</feature>
<feature type="binding site" evidence="1">
    <location>
        <position position="569"/>
    </location>
    <ligand>
        <name>Zn(2+)</name>
        <dbReference type="ChEBI" id="CHEBI:29105"/>
    </ligand>
</feature>
<feature type="binding site" evidence="1">
    <location>
        <position position="573"/>
    </location>
    <ligand>
        <name>Zn(2+)</name>
        <dbReference type="ChEBI" id="CHEBI:29105"/>
    </ligand>
</feature>
<feature type="binding site" evidence="1">
    <location>
        <position position="693"/>
    </location>
    <ligand>
        <name>Zn(2+)</name>
        <dbReference type="ChEBI" id="CHEBI:29105"/>
    </ligand>
</feature>
<feature type="binding site" evidence="1">
    <location>
        <position position="697"/>
    </location>
    <ligand>
        <name>Zn(2+)</name>
        <dbReference type="ChEBI" id="CHEBI:29105"/>
    </ligand>
</feature>
<keyword id="KW-0030">Aminoacyl-tRNA synthetase</keyword>
<keyword id="KW-0067">ATP-binding</keyword>
<keyword id="KW-0963">Cytoplasm</keyword>
<keyword id="KW-0436">Ligase</keyword>
<keyword id="KW-0479">Metal-binding</keyword>
<keyword id="KW-0547">Nucleotide-binding</keyword>
<keyword id="KW-0648">Protein biosynthesis</keyword>
<keyword id="KW-1185">Reference proteome</keyword>
<keyword id="KW-0694">RNA-binding</keyword>
<keyword id="KW-0820">tRNA-binding</keyword>
<keyword id="KW-0862">Zinc</keyword>
<organism>
    <name type="scientific">Roseiflexus castenholzii (strain DSM 13941 / HLO8)</name>
    <dbReference type="NCBI Taxonomy" id="383372"/>
    <lineage>
        <taxon>Bacteria</taxon>
        <taxon>Bacillati</taxon>
        <taxon>Chloroflexota</taxon>
        <taxon>Chloroflexia</taxon>
        <taxon>Chloroflexales</taxon>
        <taxon>Roseiflexineae</taxon>
        <taxon>Roseiflexaceae</taxon>
        <taxon>Roseiflexus</taxon>
    </lineage>
</organism>
<comment type="function">
    <text evidence="1">Catalyzes the attachment of alanine to tRNA(Ala) in a two-step reaction: alanine is first activated by ATP to form Ala-AMP and then transferred to the acceptor end of tRNA(Ala). Also edits incorrectly charged Ser-tRNA(Ala) and Gly-tRNA(Ala) via its editing domain.</text>
</comment>
<comment type="catalytic activity">
    <reaction evidence="1">
        <text>tRNA(Ala) + L-alanine + ATP = L-alanyl-tRNA(Ala) + AMP + diphosphate</text>
        <dbReference type="Rhea" id="RHEA:12540"/>
        <dbReference type="Rhea" id="RHEA-COMP:9657"/>
        <dbReference type="Rhea" id="RHEA-COMP:9923"/>
        <dbReference type="ChEBI" id="CHEBI:30616"/>
        <dbReference type="ChEBI" id="CHEBI:33019"/>
        <dbReference type="ChEBI" id="CHEBI:57972"/>
        <dbReference type="ChEBI" id="CHEBI:78442"/>
        <dbReference type="ChEBI" id="CHEBI:78497"/>
        <dbReference type="ChEBI" id="CHEBI:456215"/>
        <dbReference type="EC" id="6.1.1.7"/>
    </reaction>
</comment>
<comment type="cofactor">
    <cofactor evidence="1">
        <name>Zn(2+)</name>
        <dbReference type="ChEBI" id="CHEBI:29105"/>
    </cofactor>
    <text evidence="1">Binds 1 zinc ion per subunit.</text>
</comment>
<comment type="subcellular location">
    <subcellularLocation>
        <location evidence="1">Cytoplasm</location>
    </subcellularLocation>
</comment>
<comment type="domain">
    <text evidence="1">Consists of three domains; the N-terminal catalytic domain, the editing domain and the C-terminal C-Ala domain. The editing domain removes incorrectly charged amino acids, while the C-Ala domain, along with tRNA(Ala), serves as a bridge to cooperatively bring together the editing and aminoacylation centers thus stimulating deacylation of misacylated tRNAs.</text>
</comment>
<comment type="similarity">
    <text evidence="1">Belongs to the class-II aminoacyl-tRNA synthetase family.</text>
</comment>
<reference key="1">
    <citation type="submission" date="2007-08" db="EMBL/GenBank/DDBJ databases">
        <title>Complete sequence of Roseiflexus castenholzii DSM 13941.</title>
        <authorList>
            <consortium name="US DOE Joint Genome Institute"/>
            <person name="Copeland A."/>
            <person name="Lucas S."/>
            <person name="Lapidus A."/>
            <person name="Barry K."/>
            <person name="Glavina del Rio T."/>
            <person name="Dalin E."/>
            <person name="Tice H."/>
            <person name="Pitluck S."/>
            <person name="Thompson L.S."/>
            <person name="Brettin T."/>
            <person name="Bruce D."/>
            <person name="Detter J.C."/>
            <person name="Han C."/>
            <person name="Tapia R."/>
            <person name="Schmutz J."/>
            <person name="Larimer F."/>
            <person name="Land M."/>
            <person name="Hauser L."/>
            <person name="Kyrpides N."/>
            <person name="Mikhailova N."/>
            <person name="Bryant D.A."/>
            <person name="Hanada S."/>
            <person name="Tsukatani Y."/>
            <person name="Richardson P."/>
        </authorList>
    </citation>
    <scope>NUCLEOTIDE SEQUENCE [LARGE SCALE GENOMIC DNA]</scope>
    <source>
        <strain>DSM 13941 / HLO8</strain>
    </source>
</reference>
<name>SYA_ROSCS</name>
<gene>
    <name evidence="1" type="primary">alaS</name>
    <name type="ordered locus">Rcas_3711</name>
</gene>
<protein>
    <recommendedName>
        <fullName evidence="1">Alanine--tRNA ligase</fullName>
        <ecNumber evidence="1">6.1.1.7</ecNumber>
    </recommendedName>
    <alternativeName>
        <fullName evidence="1">Alanyl-tRNA synthetase</fullName>
        <shortName evidence="1">AlaRS</shortName>
    </alternativeName>
</protein>
<evidence type="ECO:0000255" key="1">
    <source>
        <dbReference type="HAMAP-Rule" id="MF_00036"/>
    </source>
</evidence>